<reference key="1">
    <citation type="journal article" date="1997" name="Int. J. Syst. Bacteriol.">
        <title>A phylogenetic analysis of Borrelia burgdorferi sensu lato based on sequence information from the hbb gene, coding for a histone-like protein.</title>
        <authorList>
            <person name="Valsangiacomo C."/>
            <person name="Balmelli T."/>
            <person name="Piffaretti J.C."/>
        </authorList>
    </citation>
    <scope>NUCLEOTIDE SEQUENCE [GENOMIC DNA]</scope>
    <source>
        <strain>A26S</strain>
        <strain>ATCC 51567 / DSM 10508 / CIP 103469 / VS461</strain>
        <strain>BO23</strain>
        <strain>DK8</strain>
        <strain>ECM1</strain>
        <strain>UO1</strain>
    </source>
</reference>
<accession>Q57220</accession>
<accession>Q44624</accession>
<protein>
    <recommendedName>
        <fullName>DNA-binding protein HBbu</fullName>
    </recommendedName>
</protein>
<keyword id="KW-0226">DNA condensation</keyword>
<keyword id="KW-0238">DNA-binding</keyword>
<dbReference type="EMBL" id="U48671">
    <property type="protein sequence ID" value="AAC73093.1"/>
    <property type="molecule type" value="Genomic_DNA"/>
</dbReference>
<dbReference type="EMBL" id="U48672">
    <property type="protein sequence ID" value="AAC73094.1"/>
    <property type="molecule type" value="Genomic_DNA"/>
</dbReference>
<dbReference type="EMBL" id="U48673">
    <property type="protein sequence ID" value="AAC73095.1"/>
    <property type="molecule type" value="Genomic_DNA"/>
</dbReference>
<dbReference type="EMBL" id="U48674">
    <property type="protein sequence ID" value="AAC73096.1"/>
    <property type="molecule type" value="Genomic_DNA"/>
</dbReference>
<dbReference type="EMBL" id="U48675">
    <property type="protein sequence ID" value="AAC73097.1"/>
    <property type="molecule type" value="Genomic_DNA"/>
</dbReference>
<dbReference type="EMBL" id="U48676">
    <property type="protein sequence ID" value="AAC73098.1"/>
    <property type="molecule type" value="Genomic_DNA"/>
</dbReference>
<dbReference type="RefSeq" id="WP_004790234.1">
    <property type="nucleotide sequence ID" value="NZ_JACHGM010000002.1"/>
</dbReference>
<dbReference type="SMR" id="Q57220"/>
<dbReference type="OMA" id="MSMTKAD"/>
<dbReference type="GO" id="GO:0005829">
    <property type="term" value="C:cytosol"/>
    <property type="evidence" value="ECO:0007669"/>
    <property type="project" value="TreeGrafter"/>
</dbReference>
<dbReference type="GO" id="GO:0003677">
    <property type="term" value="F:DNA binding"/>
    <property type="evidence" value="ECO:0007669"/>
    <property type="project" value="UniProtKB-KW"/>
</dbReference>
<dbReference type="GO" id="GO:0030527">
    <property type="term" value="F:structural constituent of chromatin"/>
    <property type="evidence" value="ECO:0007669"/>
    <property type="project" value="InterPro"/>
</dbReference>
<dbReference type="GO" id="GO:0030261">
    <property type="term" value="P:chromosome condensation"/>
    <property type="evidence" value="ECO:0007669"/>
    <property type="project" value="UniProtKB-KW"/>
</dbReference>
<dbReference type="CDD" id="cd13836">
    <property type="entry name" value="IHF_B"/>
    <property type="match status" value="1"/>
</dbReference>
<dbReference type="Gene3D" id="4.10.520.10">
    <property type="entry name" value="IHF-like DNA-binding proteins"/>
    <property type="match status" value="1"/>
</dbReference>
<dbReference type="InterPro" id="IPR000119">
    <property type="entry name" value="Hist_DNA-bd"/>
</dbReference>
<dbReference type="InterPro" id="IPR020816">
    <property type="entry name" value="Histone-like_DNA-bd_CS"/>
</dbReference>
<dbReference type="InterPro" id="IPR010992">
    <property type="entry name" value="IHF-like_DNA-bd_dom_sf"/>
</dbReference>
<dbReference type="PANTHER" id="PTHR33175">
    <property type="entry name" value="DNA-BINDING PROTEIN HU"/>
    <property type="match status" value="1"/>
</dbReference>
<dbReference type="PANTHER" id="PTHR33175:SF3">
    <property type="entry name" value="DNA-BINDING PROTEIN HU-BETA"/>
    <property type="match status" value="1"/>
</dbReference>
<dbReference type="Pfam" id="PF00216">
    <property type="entry name" value="Bac_DNA_binding"/>
    <property type="match status" value="1"/>
</dbReference>
<dbReference type="PRINTS" id="PR01727">
    <property type="entry name" value="DNABINDINGHU"/>
</dbReference>
<dbReference type="SMART" id="SM00411">
    <property type="entry name" value="BHL"/>
    <property type="match status" value="1"/>
</dbReference>
<dbReference type="SUPFAM" id="SSF47729">
    <property type="entry name" value="IHF-like DNA-binding proteins"/>
    <property type="match status" value="1"/>
</dbReference>
<dbReference type="PROSITE" id="PS00045">
    <property type="entry name" value="HISTONE_LIKE"/>
    <property type="match status" value="1"/>
</dbReference>
<feature type="chain" id="PRO_0000104919" description="DNA-binding protein HBbu">
    <location>
        <begin position="1"/>
        <end position="108"/>
    </location>
</feature>
<feature type="sequence variant" description="In strain: UO1.">
    <original>S</original>
    <variation>A</variation>
    <location>
        <position position="19"/>
    </location>
</feature>
<feature type="sequence variant" description="In strain: UO1.">
    <original>R</original>
    <variation>K</variation>
    <location>
        <position position="23"/>
    </location>
</feature>
<feature type="sequence variant" description="In strain: UO1.">
    <original>H</original>
    <variation>N</variation>
    <location>
        <position position="89"/>
    </location>
</feature>
<organism>
    <name type="scientific">Borreliella afzelii</name>
    <name type="common">Borrelia afzelii</name>
    <dbReference type="NCBI Taxonomy" id="29518"/>
    <lineage>
        <taxon>Bacteria</taxon>
        <taxon>Pseudomonadati</taxon>
        <taxon>Spirochaetota</taxon>
        <taxon>Spirochaetia</taxon>
        <taxon>Spirochaetales</taxon>
        <taxon>Borreliaceae</taxon>
        <taxon>Borreliella</taxon>
    </lineage>
</organism>
<evidence type="ECO:0000250" key="1"/>
<evidence type="ECO:0000305" key="2"/>
<sequence>MSFPRRPKVTKSDIVDQISLNIRNNNLKLEKKYIRLVIDAFFEELKSNLCSNNVIEFRSFGTFEVRKRKGRLNARNPQTGEYVKVLDHHVAYFRPGKDLKERVWGIKG</sequence>
<name>DBH_BORAF</name>
<comment type="function">
    <text evidence="1">Histone-like DNA-binding protein which is capable of wrapping DNA to stabilize it, and thus to prevent its denaturation under extreme environmental conditions.</text>
</comment>
<comment type="similarity">
    <text evidence="2">Belongs to the bacterial histone-like protein family.</text>
</comment>
<proteinExistence type="inferred from homology"/>
<gene>
    <name type="primary">hbb</name>
</gene>